<protein>
    <recommendedName>
        <fullName evidence="2">Transmembrane protein 217B</fullName>
    </recommendedName>
</protein>
<organism>
    <name type="scientific">Homo sapiens</name>
    <name type="common">Human</name>
    <dbReference type="NCBI Taxonomy" id="9606"/>
    <lineage>
        <taxon>Eukaryota</taxon>
        <taxon>Metazoa</taxon>
        <taxon>Chordata</taxon>
        <taxon>Craniata</taxon>
        <taxon>Vertebrata</taxon>
        <taxon>Euteleostomi</taxon>
        <taxon>Mammalia</taxon>
        <taxon>Eutheria</taxon>
        <taxon>Euarchontoglires</taxon>
        <taxon>Primates</taxon>
        <taxon>Haplorrhini</taxon>
        <taxon>Catarrhini</taxon>
        <taxon>Hominidae</taxon>
        <taxon>Homo</taxon>
    </lineage>
</organism>
<keyword id="KW-0472">Membrane</keyword>
<keyword id="KW-1185">Reference proteome</keyword>
<keyword id="KW-0732">Signal</keyword>
<keyword id="KW-0812">Transmembrane</keyword>
<keyword id="KW-1133">Transmembrane helix</keyword>
<comment type="subcellular location">
    <subcellularLocation>
        <location evidence="1">Membrane</location>
        <topology evidence="1">Multi-pass membrane protein</topology>
    </subcellularLocation>
</comment>
<comment type="miscellaneous">
    <text evidence="2">Found in the 3'UTR of TMEM217/ AC Q8N7C4. Cotranscriptional with TMEM217 and seems to be only ever transcribed from the same promoter region.</text>
</comment>
<feature type="signal peptide" evidence="1">
    <location>
        <begin position="1"/>
        <end position="21"/>
    </location>
</feature>
<feature type="chain" id="PRO_5024747049" description="Transmembrane protein 217B" evidence="1">
    <location>
        <begin position="22"/>
        <end position="170"/>
    </location>
</feature>
<feature type="topological domain" description="Lumenal" evidence="2">
    <location>
        <begin position="22"/>
        <end position="58"/>
    </location>
</feature>
<feature type="transmembrane region" description="Helical" evidence="1">
    <location>
        <begin position="59"/>
        <end position="79"/>
    </location>
</feature>
<feature type="topological domain" description="Cytoplasmic" evidence="2">
    <location>
        <begin position="80"/>
        <end position="85"/>
    </location>
</feature>
<feature type="transmembrane region" description="Helical" evidence="1">
    <location>
        <begin position="86"/>
        <end position="106"/>
    </location>
</feature>
<feature type="topological domain" description="Lumenal" evidence="2">
    <location>
        <begin position="107"/>
        <end position="120"/>
    </location>
</feature>
<feature type="transmembrane region" description="Helical" evidence="1">
    <location>
        <begin position="121"/>
        <end position="141"/>
    </location>
</feature>
<feature type="topological domain" description="Cytoplasmic" evidence="2">
    <location>
        <begin position="142"/>
        <end position="170"/>
    </location>
</feature>
<sequence>MNVRMFSLMVGIFSVLNTTQFFIFDLNQKTHICYEAKFSIYVDSKSELVTWTLFHRANISTGLSLTTIIIGCFLFYCIHKNIYMGLLIYAMWIITYELINFSIVLLLNGIIKDHFKTLSYLHWIFQISHMLLHFFCLPFIVKHAYNLYKESQTVGRKRRHRLCSTIAVNS</sequence>
<proteinExistence type="inferred from homology"/>
<reference key="1">
    <citation type="journal article" date="2003" name="Nature">
        <title>The DNA sequence and analysis of human chromosome 6.</title>
        <authorList>
            <person name="Mungall A.J."/>
            <person name="Palmer S.A."/>
            <person name="Sims S.K."/>
            <person name="Edwards C.A."/>
            <person name="Ashurst J.L."/>
            <person name="Wilming L."/>
            <person name="Jones M.C."/>
            <person name="Horton R."/>
            <person name="Hunt S.E."/>
            <person name="Scott C.E."/>
            <person name="Gilbert J.G.R."/>
            <person name="Clamp M.E."/>
            <person name="Bethel G."/>
            <person name="Milne S."/>
            <person name="Ainscough R."/>
            <person name="Almeida J.P."/>
            <person name="Ambrose K.D."/>
            <person name="Andrews T.D."/>
            <person name="Ashwell R.I.S."/>
            <person name="Babbage A.K."/>
            <person name="Bagguley C.L."/>
            <person name="Bailey J."/>
            <person name="Banerjee R."/>
            <person name="Barker D.J."/>
            <person name="Barlow K.F."/>
            <person name="Bates K."/>
            <person name="Beare D.M."/>
            <person name="Beasley H."/>
            <person name="Beasley O."/>
            <person name="Bird C.P."/>
            <person name="Blakey S.E."/>
            <person name="Bray-Allen S."/>
            <person name="Brook J."/>
            <person name="Brown A.J."/>
            <person name="Brown J.Y."/>
            <person name="Burford D.C."/>
            <person name="Burrill W."/>
            <person name="Burton J."/>
            <person name="Carder C."/>
            <person name="Carter N.P."/>
            <person name="Chapman J.C."/>
            <person name="Clark S.Y."/>
            <person name="Clark G."/>
            <person name="Clee C.M."/>
            <person name="Clegg S."/>
            <person name="Cobley V."/>
            <person name="Collier R.E."/>
            <person name="Collins J.E."/>
            <person name="Colman L.K."/>
            <person name="Corby N.R."/>
            <person name="Coville G.J."/>
            <person name="Culley K.M."/>
            <person name="Dhami P."/>
            <person name="Davies J."/>
            <person name="Dunn M."/>
            <person name="Earthrowl M.E."/>
            <person name="Ellington A.E."/>
            <person name="Evans K.A."/>
            <person name="Faulkner L."/>
            <person name="Francis M.D."/>
            <person name="Frankish A."/>
            <person name="Frankland J."/>
            <person name="French L."/>
            <person name="Garner P."/>
            <person name="Garnett J."/>
            <person name="Ghori M.J."/>
            <person name="Gilby L.M."/>
            <person name="Gillson C.J."/>
            <person name="Glithero R.J."/>
            <person name="Grafham D.V."/>
            <person name="Grant M."/>
            <person name="Gribble S."/>
            <person name="Griffiths C."/>
            <person name="Griffiths M.N.D."/>
            <person name="Hall R."/>
            <person name="Halls K.S."/>
            <person name="Hammond S."/>
            <person name="Harley J.L."/>
            <person name="Hart E.A."/>
            <person name="Heath P.D."/>
            <person name="Heathcott R."/>
            <person name="Holmes S.J."/>
            <person name="Howden P.J."/>
            <person name="Howe K.L."/>
            <person name="Howell G.R."/>
            <person name="Huckle E."/>
            <person name="Humphray S.J."/>
            <person name="Humphries M.D."/>
            <person name="Hunt A.R."/>
            <person name="Johnson C.M."/>
            <person name="Joy A.A."/>
            <person name="Kay M."/>
            <person name="Keenan S.J."/>
            <person name="Kimberley A.M."/>
            <person name="King A."/>
            <person name="Laird G.K."/>
            <person name="Langford C."/>
            <person name="Lawlor S."/>
            <person name="Leongamornlert D.A."/>
            <person name="Leversha M."/>
            <person name="Lloyd C.R."/>
            <person name="Lloyd D.M."/>
            <person name="Loveland J.E."/>
            <person name="Lovell J."/>
            <person name="Martin S."/>
            <person name="Mashreghi-Mohammadi M."/>
            <person name="Maslen G.L."/>
            <person name="Matthews L."/>
            <person name="McCann O.T."/>
            <person name="McLaren S.J."/>
            <person name="McLay K."/>
            <person name="McMurray A."/>
            <person name="Moore M.J.F."/>
            <person name="Mullikin J.C."/>
            <person name="Niblett D."/>
            <person name="Nickerson T."/>
            <person name="Novik K.L."/>
            <person name="Oliver K."/>
            <person name="Overton-Larty E.K."/>
            <person name="Parker A."/>
            <person name="Patel R."/>
            <person name="Pearce A.V."/>
            <person name="Peck A.I."/>
            <person name="Phillimore B.J.C.T."/>
            <person name="Phillips S."/>
            <person name="Plumb R.W."/>
            <person name="Porter K.M."/>
            <person name="Ramsey Y."/>
            <person name="Ranby S.A."/>
            <person name="Rice C.M."/>
            <person name="Ross M.T."/>
            <person name="Searle S.M."/>
            <person name="Sehra H.K."/>
            <person name="Sheridan E."/>
            <person name="Skuce C.D."/>
            <person name="Smith S."/>
            <person name="Smith M."/>
            <person name="Spraggon L."/>
            <person name="Squares S.L."/>
            <person name="Steward C.A."/>
            <person name="Sycamore N."/>
            <person name="Tamlyn-Hall G."/>
            <person name="Tester J."/>
            <person name="Theaker A.J."/>
            <person name="Thomas D.W."/>
            <person name="Thorpe A."/>
            <person name="Tracey A."/>
            <person name="Tromans A."/>
            <person name="Tubby B."/>
            <person name="Wall M."/>
            <person name="Wallis J.M."/>
            <person name="West A.P."/>
            <person name="White S.S."/>
            <person name="Whitehead S.L."/>
            <person name="Whittaker H."/>
            <person name="Wild A."/>
            <person name="Willey D.J."/>
            <person name="Wilmer T.E."/>
            <person name="Wood J.M."/>
            <person name="Wray P.W."/>
            <person name="Wyatt J.C."/>
            <person name="Young L."/>
            <person name="Younger R.M."/>
            <person name="Bentley D.R."/>
            <person name="Coulson A."/>
            <person name="Durbin R.M."/>
            <person name="Hubbard T."/>
            <person name="Sulston J.E."/>
            <person name="Dunham I."/>
            <person name="Rogers J."/>
            <person name="Beck S."/>
        </authorList>
    </citation>
    <scope>NUCLEOTIDE SEQUENCE [LARGE SCALE GENOMIC DNA]</scope>
</reference>
<gene>
    <name evidence="3" type="primary">TMEM217B</name>
</gene>
<name>T217B_HUMAN</name>
<dbReference type="EMBL" id="AL353579">
    <property type="status" value="NOT_ANNOTATED_CDS"/>
    <property type="molecule type" value="Genomic_DNA"/>
</dbReference>
<dbReference type="CCDS" id="CCDS93907.1"/>
<dbReference type="RefSeq" id="NP_001382306.1">
    <property type="nucleotide sequence ID" value="NM_001395377.1"/>
</dbReference>
<dbReference type="RefSeq" id="NP_001382307.1">
    <property type="nucleotide sequence ID" value="NM_001395378.1"/>
</dbReference>
<dbReference type="RefSeq" id="NP_001382867.1">
    <property type="nucleotide sequence ID" value="NM_001395938.1"/>
</dbReference>
<dbReference type="RefSeq" id="XP_011512671.1">
    <property type="nucleotide sequence ID" value="XM_011514369.2"/>
</dbReference>
<dbReference type="RefSeq" id="XP_011512672.1">
    <property type="nucleotide sequence ID" value="XM_011514370.2"/>
</dbReference>
<dbReference type="STRING" id="9606.ENSP00000499172"/>
<dbReference type="DNASU" id="221468"/>
<dbReference type="Ensembl" id="ENST00000478262.2">
    <property type="protein sequence ID" value="ENSP00000498233.1"/>
    <property type="gene ID" value="ENSG00000286105.2"/>
</dbReference>
<dbReference type="Ensembl" id="ENST00000497775.2">
    <property type="protein sequence ID" value="ENSP00000499172.1"/>
    <property type="gene ID" value="ENSG00000286105.2"/>
</dbReference>
<dbReference type="Ensembl" id="ENST00000650812.1">
    <property type="protein sequence ID" value="ENSP00000498349.1"/>
    <property type="gene ID" value="ENSG00000286105.2"/>
</dbReference>
<dbReference type="GeneID" id="121725057"/>
<dbReference type="MANE-Select" id="ENST00000497775.2">
    <property type="protein sequence ID" value="ENSP00000499172.1"/>
    <property type="RefSeq nucleotide sequence ID" value="NM_001395378.1"/>
    <property type="RefSeq protein sequence ID" value="NP_001382307.1"/>
</dbReference>
<dbReference type="AGR" id="HGNC:55922"/>
<dbReference type="DisGeNET" id="221468"/>
<dbReference type="GeneCards" id="TMEM217B"/>
<dbReference type="HGNC" id="HGNC:55922">
    <property type="gene designation" value="TMEM217B"/>
</dbReference>
<dbReference type="HPA" id="ENSG00000286105">
    <property type="expression patterns" value="Tissue enriched (testis)"/>
</dbReference>
<dbReference type="VEuPathDB" id="HostDB:ENSG00000286105"/>
<dbReference type="GeneTree" id="ENSGT00730000111479"/>
<dbReference type="InParanoid" id="A0A494BZU4"/>
<dbReference type="OMA" id="YVGLLCY"/>
<dbReference type="OrthoDB" id="9443855at2759"/>
<dbReference type="ChiTaRS" id="TMEM217">
    <property type="organism name" value="human"/>
</dbReference>
<dbReference type="Proteomes" id="UP000005640">
    <property type="component" value="Chromosome 6"/>
</dbReference>
<dbReference type="Bgee" id="ENSG00000286105">
    <property type="expression patterns" value="Expressed in male germ line stem cell (sensu Vertebrata) in testis and 69 other cell types or tissues"/>
</dbReference>
<dbReference type="GO" id="GO:0016020">
    <property type="term" value="C:membrane"/>
    <property type="evidence" value="ECO:0007669"/>
    <property type="project" value="UniProtKB-SubCell"/>
</dbReference>
<dbReference type="InterPro" id="IPR027862">
    <property type="entry name" value="DUF4534"/>
</dbReference>
<dbReference type="PANTHER" id="PTHR34928">
    <property type="entry name" value="TRANSMEMBRANE PROTEIN 217"/>
    <property type="match status" value="1"/>
</dbReference>
<dbReference type="PANTHER" id="PTHR34928:SF3">
    <property type="entry name" value="TRANSMEMBRANE PROTEIN 217B-RELATED"/>
    <property type="match status" value="1"/>
</dbReference>
<dbReference type="Pfam" id="PF15049">
    <property type="entry name" value="DUF4534"/>
    <property type="match status" value="1"/>
</dbReference>
<accession>A0A494BZU4</accession>
<evidence type="ECO:0000255" key="1"/>
<evidence type="ECO:0000305" key="2"/>
<evidence type="ECO:0000312" key="3">
    <source>
        <dbReference type="HGNC" id="HGNC:55922"/>
    </source>
</evidence>